<proteinExistence type="inferred from homology"/>
<comment type="function">
    <text evidence="1">Catalyzes the transfer of a dimethylallyl group onto the adenine at position 37 in tRNAs that read codons beginning with uridine, leading to the formation of N6-(dimethylallyl)adenosine (i(6)A).</text>
</comment>
<comment type="catalytic activity">
    <reaction evidence="1">
        <text>adenosine(37) in tRNA + dimethylallyl diphosphate = N(6)-dimethylallyladenosine(37) in tRNA + diphosphate</text>
        <dbReference type="Rhea" id="RHEA:26482"/>
        <dbReference type="Rhea" id="RHEA-COMP:10162"/>
        <dbReference type="Rhea" id="RHEA-COMP:10375"/>
        <dbReference type="ChEBI" id="CHEBI:33019"/>
        <dbReference type="ChEBI" id="CHEBI:57623"/>
        <dbReference type="ChEBI" id="CHEBI:74411"/>
        <dbReference type="ChEBI" id="CHEBI:74415"/>
        <dbReference type="EC" id="2.5.1.75"/>
    </reaction>
</comment>
<comment type="cofactor">
    <cofactor evidence="1">
        <name>Mg(2+)</name>
        <dbReference type="ChEBI" id="CHEBI:18420"/>
    </cofactor>
</comment>
<comment type="subunit">
    <text evidence="1">Monomer.</text>
</comment>
<comment type="similarity">
    <text evidence="1">Belongs to the IPP transferase family.</text>
</comment>
<accession>Q128B6</accession>
<protein>
    <recommendedName>
        <fullName evidence="1">tRNA dimethylallyltransferase</fullName>
        <ecNumber evidence="1">2.5.1.75</ecNumber>
    </recommendedName>
    <alternativeName>
        <fullName evidence="1">Dimethylallyl diphosphate:tRNA dimethylallyltransferase</fullName>
        <shortName evidence="1">DMAPP:tRNA dimethylallyltransferase</shortName>
        <shortName evidence="1">DMATase</shortName>
    </alternativeName>
    <alternativeName>
        <fullName evidence="1">Isopentenyl-diphosphate:tRNA isopentenyltransferase</fullName>
        <shortName evidence="1">IPP transferase</shortName>
        <shortName evidence="1">IPPT</shortName>
        <shortName evidence="1">IPTase</shortName>
    </alternativeName>
</protein>
<dbReference type="EC" id="2.5.1.75" evidence="1"/>
<dbReference type="EMBL" id="CP000316">
    <property type="protein sequence ID" value="ABE45126.1"/>
    <property type="molecule type" value="Genomic_DNA"/>
</dbReference>
<dbReference type="RefSeq" id="WP_011484121.1">
    <property type="nucleotide sequence ID" value="NC_007948.1"/>
</dbReference>
<dbReference type="SMR" id="Q128B6"/>
<dbReference type="STRING" id="296591.Bpro_3212"/>
<dbReference type="KEGG" id="pol:Bpro_3212"/>
<dbReference type="eggNOG" id="COG0324">
    <property type="taxonomic scope" value="Bacteria"/>
</dbReference>
<dbReference type="HOGENOM" id="CLU_032616_0_0_4"/>
<dbReference type="OrthoDB" id="9776390at2"/>
<dbReference type="Proteomes" id="UP000001983">
    <property type="component" value="Chromosome"/>
</dbReference>
<dbReference type="GO" id="GO:0005524">
    <property type="term" value="F:ATP binding"/>
    <property type="evidence" value="ECO:0007669"/>
    <property type="project" value="UniProtKB-UniRule"/>
</dbReference>
<dbReference type="GO" id="GO:0052381">
    <property type="term" value="F:tRNA dimethylallyltransferase activity"/>
    <property type="evidence" value="ECO:0007669"/>
    <property type="project" value="UniProtKB-UniRule"/>
</dbReference>
<dbReference type="GO" id="GO:0006400">
    <property type="term" value="P:tRNA modification"/>
    <property type="evidence" value="ECO:0007669"/>
    <property type="project" value="TreeGrafter"/>
</dbReference>
<dbReference type="FunFam" id="1.10.20.140:FF:000001">
    <property type="entry name" value="tRNA dimethylallyltransferase"/>
    <property type="match status" value="1"/>
</dbReference>
<dbReference type="Gene3D" id="1.10.20.140">
    <property type="match status" value="1"/>
</dbReference>
<dbReference type="Gene3D" id="3.40.50.300">
    <property type="entry name" value="P-loop containing nucleotide triphosphate hydrolases"/>
    <property type="match status" value="1"/>
</dbReference>
<dbReference type="HAMAP" id="MF_00185">
    <property type="entry name" value="IPP_trans"/>
    <property type="match status" value="1"/>
</dbReference>
<dbReference type="InterPro" id="IPR039657">
    <property type="entry name" value="Dimethylallyltransferase"/>
</dbReference>
<dbReference type="InterPro" id="IPR018022">
    <property type="entry name" value="IPT"/>
</dbReference>
<dbReference type="InterPro" id="IPR027417">
    <property type="entry name" value="P-loop_NTPase"/>
</dbReference>
<dbReference type="NCBIfam" id="TIGR00174">
    <property type="entry name" value="miaA"/>
    <property type="match status" value="1"/>
</dbReference>
<dbReference type="PANTHER" id="PTHR11088">
    <property type="entry name" value="TRNA DIMETHYLALLYLTRANSFERASE"/>
    <property type="match status" value="1"/>
</dbReference>
<dbReference type="PANTHER" id="PTHR11088:SF60">
    <property type="entry name" value="TRNA DIMETHYLALLYLTRANSFERASE"/>
    <property type="match status" value="1"/>
</dbReference>
<dbReference type="Pfam" id="PF01715">
    <property type="entry name" value="IPPT"/>
    <property type="match status" value="1"/>
</dbReference>
<dbReference type="SUPFAM" id="SSF52540">
    <property type="entry name" value="P-loop containing nucleoside triphosphate hydrolases"/>
    <property type="match status" value="1"/>
</dbReference>
<organism>
    <name type="scientific">Polaromonas sp. (strain JS666 / ATCC BAA-500)</name>
    <dbReference type="NCBI Taxonomy" id="296591"/>
    <lineage>
        <taxon>Bacteria</taxon>
        <taxon>Pseudomonadati</taxon>
        <taxon>Pseudomonadota</taxon>
        <taxon>Betaproteobacteria</taxon>
        <taxon>Burkholderiales</taxon>
        <taxon>Comamonadaceae</taxon>
        <taxon>Polaromonas</taxon>
    </lineage>
</organism>
<feature type="chain" id="PRO_1000058437" description="tRNA dimethylallyltransferase">
    <location>
        <begin position="1"/>
        <end position="333"/>
    </location>
</feature>
<feature type="region of interest" description="Interaction with substrate tRNA" evidence="1">
    <location>
        <begin position="41"/>
        <end position="44"/>
    </location>
</feature>
<feature type="region of interest" description="Interaction with substrate tRNA" evidence="1">
    <location>
        <begin position="165"/>
        <end position="169"/>
    </location>
</feature>
<feature type="region of interest" description="Interaction with substrate tRNA" evidence="1">
    <location>
        <begin position="253"/>
        <end position="258"/>
    </location>
</feature>
<feature type="binding site" evidence="1">
    <location>
        <begin position="16"/>
        <end position="23"/>
    </location>
    <ligand>
        <name>ATP</name>
        <dbReference type="ChEBI" id="CHEBI:30616"/>
    </ligand>
</feature>
<feature type="binding site" evidence="1">
    <location>
        <begin position="18"/>
        <end position="23"/>
    </location>
    <ligand>
        <name>substrate</name>
    </ligand>
</feature>
<feature type="site" description="Interaction with substrate tRNA" evidence="1">
    <location>
        <position position="107"/>
    </location>
</feature>
<feature type="site" description="Interaction with substrate tRNA" evidence="1">
    <location>
        <position position="129"/>
    </location>
</feature>
<evidence type="ECO:0000255" key="1">
    <source>
        <dbReference type="HAMAP-Rule" id="MF_00185"/>
    </source>
</evidence>
<keyword id="KW-0067">ATP-binding</keyword>
<keyword id="KW-0460">Magnesium</keyword>
<keyword id="KW-0547">Nucleotide-binding</keyword>
<keyword id="KW-1185">Reference proteome</keyword>
<keyword id="KW-0808">Transferase</keyword>
<keyword id="KW-0819">tRNA processing</keyword>
<gene>
    <name evidence="1" type="primary">miaA</name>
    <name type="ordered locus">Bpro_3212</name>
</gene>
<reference key="1">
    <citation type="journal article" date="2008" name="Appl. Environ. Microbiol.">
        <title>The genome of Polaromonas sp. strain JS666: insights into the evolution of a hydrocarbon- and xenobiotic-degrading bacterium, and features of relevance to biotechnology.</title>
        <authorList>
            <person name="Mattes T.E."/>
            <person name="Alexander A.K."/>
            <person name="Richardson P.M."/>
            <person name="Munk A.C."/>
            <person name="Han C.S."/>
            <person name="Stothard P."/>
            <person name="Coleman N.V."/>
        </authorList>
    </citation>
    <scope>NUCLEOTIDE SEQUENCE [LARGE SCALE GENOMIC DNA]</scope>
    <source>
        <strain>JS666 / ATCC BAA-500</strain>
    </source>
</reference>
<sequence length="333" mass="36518">MNEVKSVGAKYIALTGPTASGKTAAAMAIAQQHDVEIISVDSALVYRGMDIGTAKPTVDELAAVPHHLINIRDPLQAYSAAEFVADAQRLIDDIAARGKLPLLVGGTMLYFKALFYGLDDMPKADPAVRAELASEAAAKGWPALHAELATVDPVTAARLAPHDSQRISRALEVFRVSGQPLSFFHQQNAAKTIADDGREERTEILISLEPQERSWLHHRIAERFDAMLAAGFVEEVKTLRARGDLTPDLPSMRCVGYRQAWELLDAQEARSPGGSFPMDELRDKGIIATRQLAKRQVTWLRSMPQRQIITCDTDQALPLVLQAVAQHIEKSSR</sequence>
<name>MIAA_POLSJ</name>